<evidence type="ECO:0000250" key="1"/>
<evidence type="ECO:0000250" key="2">
    <source>
        <dbReference type="UniProtKB" id="Q09884"/>
    </source>
</evidence>
<evidence type="ECO:0000255" key="3">
    <source>
        <dbReference type="PROSITE-ProRule" id="PRU00142"/>
    </source>
</evidence>
<evidence type="ECO:0000255" key="4">
    <source>
        <dbReference type="PROSITE-ProRule" id="PRU00177"/>
    </source>
</evidence>
<evidence type="ECO:0000255" key="5">
    <source>
        <dbReference type="PROSITE-ProRule" id="PRU00541"/>
    </source>
</evidence>
<evidence type="ECO:0000255" key="6">
    <source>
        <dbReference type="PROSITE-ProRule" id="PRU00542"/>
    </source>
</evidence>
<evidence type="ECO:0000255" key="7">
    <source>
        <dbReference type="PROSITE-ProRule" id="PRU00657"/>
    </source>
</evidence>
<evidence type="ECO:0000256" key="8">
    <source>
        <dbReference type="SAM" id="MobiDB-lite"/>
    </source>
</evidence>
<evidence type="ECO:0000305" key="9"/>
<feature type="chain" id="PRO_0000306776" description="Dicer-like protein 1">
    <location>
        <begin position="1"/>
        <end position="1523"/>
    </location>
</feature>
<feature type="domain" description="Helicase ATP-binding" evidence="5">
    <location>
        <begin position="123"/>
        <end position="304"/>
    </location>
</feature>
<feature type="domain" description="Helicase C-terminal" evidence="6">
    <location>
        <begin position="444"/>
        <end position="617"/>
    </location>
</feature>
<feature type="domain" description="Dicer dsRNA-binding fold" evidence="7">
    <location>
        <begin position="640"/>
        <end position="730"/>
    </location>
</feature>
<feature type="domain" description="PAZ" evidence="3">
    <location>
        <begin position="879"/>
        <end position="1007"/>
    </location>
</feature>
<feature type="domain" description="RNase III 1" evidence="4">
    <location>
        <begin position="1031"/>
        <end position="1190"/>
    </location>
</feature>
<feature type="domain" description="RNase III 2" evidence="4">
    <location>
        <begin position="1241"/>
        <end position="1392"/>
    </location>
</feature>
<feature type="domain" description="DRBM">
    <location>
        <begin position="1426"/>
        <end position="1494"/>
    </location>
</feature>
<feature type="region of interest" description="Disordered" evidence="8">
    <location>
        <begin position="24"/>
        <end position="58"/>
    </location>
</feature>
<feature type="short sequence motif" description="DEAH box">
    <location>
        <begin position="249"/>
        <end position="252"/>
    </location>
</feature>
<feature type="compositionally biased region" description="Polar residues" evidence="8">
    <location>
        <begin position="24"/>
        <end position="38"/>
    </location>
</feature>
<feature type="binding site" evidence="5">
    <location>
        <begin position="136"/>
        <end position="143"/>
    </location>
    <ligand>
        <name>ATP</name>
        <dbReference type="ChEBI" id="CHEBI:30616"/>
    </ligand>
</feature>
<feature type="binding site" evidence="1">
    <location>
        <position position="1281"/>
    </location>
    <ligand>
        <name>Mg(2+)</name>
        <dbReference type="ChEBI" id="CHEBI:18420"/>
    </ligand>
</feature>
<feature type="binding site" evidence="1">
    <location>
        <position position="1378"/>
    </location>
    <ligand>
        <name>Mg(2+)</name>
        <dbReference type="ChEBI" id="CHEBI:18420"/>
    </ligand>
</feature>
<feature type="binding site" evidence="1">
    <location>
        <position position="1381"/>
    </location>
    <ligand>
        <name>Mg(2+)</name>
        <dbReference type="ChEBI" id="CHEBI:18420"/>
    </ligand>
</feature>
<feature type="binding site" evidence="2">
    <location>
        <position position="1438"/>
    </location>
    <ligand>
        <name>Zn(2+)</name>
        <dbReference type="ChEBI" id="CHEBI:29105"/>
    </ligand>
</feature>
<feature type="binding site" evidence="2">
    <location>
        <position position="1465"/>
    </location>
    <ligand>
        <name>Zn(2+)</name>
        <dbReference type="ChEBI" id="CHEBI:29105"/>
    </ligand>
</feature>
<feature type="binding site" evidence="2">
    <location>
        <position position="1506"/>
    </location>
    <ligand>
        <name>Zn(2+)</name>
        <dbReference type="ChEBI" id="CHEBI:29105"/>
    </ligand>
</feature>
<feature type="binding site" evidence="2">
    <location>
        <position position="1508"/>
    </location>
    <ligand>
        <name>Zn(2+)</name>
        <dbReference type="ChEBI" id="CHEBI:29105"/>
    </ligand>
</feature>
<feature type="site" description="Important for activity" evidence="1">
    <location>
        <position position="1374"/>
    </location>
</feature>
<reference key="1">
    <citation type="journal article" date="2005" name="Nature">
        <title>Genome sequencing and analysis of Aspergillus oryzae.</title>
        <authorList>
            <person name="Machida M."/>
            <person name="Asai K."/>
            <person name="Sano M."/>
            <person name="Tanaka T."/>
            <person name="Kumagai T."/>
            <person name="Terai G."/>
            <person name="Kusumoto K."/>
            <person name="Arima T."/>
            <person name="Akita O."/>
            <person name="Kashiwagi Y."/>
            <person name="Abe K."/>
            <person name="Gomi K."/>
            <person name="Horiuchi H."/>
            <person name="Kitamoto K."/>
            <person name="Kobayashi T."/>
            <person name="Takeuchi M."/>
            <person name="Denning D.W."/>
            <person name="Galagan J.E."/>
            <person name="Nierman W.C."/>
            <person name="Yu J."/>
            <person name="Archer D.B."/>
            <person name="Bennett J.W."/>
            <person name="Bhatnagar D."/>
            <person name="Cleveland T.E."/>
            <person name="Fedorova N.D."/>
            <person name="Gotoh O."/>
            <person name="Horikawa H."/>
            <person name="Hosoyama A."/>
            <person name="Ichinomiya M."/>
            <person name="Igarashi R."/>
            <person name="Iwashita K."/>
            <person name="Juvvadi P.R."/>
            <person name="Kato M."/>
            <person name="Kato Y."/>
            <person name="Kin T."/>
            <person name="Kokubun A."/>
            <person name="Maeda H."/>
            <person name="Maeyama N."/>
            <person name="Maruyama J."/>
            <person name="Nagasaki H."/>
            <person name="Nakajima T."/>
            <person name="Oda K."/>
            <person name="Okada K."/>
            <person name="Paulsen I."/>
            <person name="Sakamoto K."/>
            <person name="Sawano T."/>
            <person name="Takahashi M."/>
            <person name="Takase K."/>
            <person name="Terabayashi Y."/>
            <person name="Wortman J.R."/>
            <person name="Yamada O."/>
            <person name="Yamagata Y."/>
            <person name="Anazawa H."/>
            <person name="Hata Y."/>
            <person name="Koide Y."/>
            <person name="Komori T."/>
            <person name="Koyama Y."/>
            <person name="Minetoki T."/>
            <person name="Suharnan S."/>
            <person name="Tanaka A."/>
            <person name="Isono K."/>
            <person name="Kuhara S."/>
            <person name="Ogasawara N."/>
            <person name="Kikuchi H."/>
        </authorList>
    </citation>
    <scope>NUCLEOTIDE SEQUENCE [LARGE SCALE GENOMIC DNA]</scope>
    <source>
        <strain>ATCC 42149 / RIB 40</strain>
    </source>
</reference>
<organism>
    <name type="scientific">Aspergillus oryzae (strain ATCC 42149 / RIB 40)</name>
    <name type="common">Yellow koji mold</name>
    <dbReference type="NCBI Taxonomy" id="510516"/>
    <lineage>
        <taxon>Eukaryota</taxon>
        <taxon>Fungi</taxon>
        <taxon>Dikarya</taxon>
        <taxon>Ascomycota</taxon>
        <taxon>Pezizomycotina</taxon>
        <taxon>Eurotiomycetes</taxon>
        <taxon>Eurotiomycetidae</taxon>
        <taxon>Eurotiales</taxon>
        <taxon>Aspergillaceae</taxon>
        <taxon>Aspergillus</taxon>
        <taxon>Aspergillus subgen. Circumdati</taxon>
    </lineage>
</organism>
<name>DCL1_ASPOR</name>
<protein>
    <recommendedName>
        <fullName>Dicer-like protein 1</fullName>
    </recommendedName>
    <domain>
        <recommendedName>
            <fullName>Endoribonuclease dcl1</fullName>
            <ecNumber>3.1.26.-</ecNumber>
        </recommendedName>
    </domain>
    <domain>
        <recommendedName>
            <fullName>ATP-dependent helicase dcl1</fullName>
            <ecNumber>3.6.4.-</ecNumber>
        </recommendedName>
    </domain>
</protein>
<dbReference type="EC" id="3.1.26.-"/>
<dbReference type="EC" id="3.6.4.-"/>
<dbReference type="EMBL" id="BA000053">
    <property type="protein sequence ID" value="BAE62891.1"/>
    <property type="status" value="ALT_SEQ"/>
    <property type="molecule type" value="Genomic_DNA"/>
</dbReference>
<dbReference type="RefSeq" id="XP_001824024.2">
    <property type="nucleotide sequence ID" value="XM_001823972.2"/>
</dbReference>
<dbReference type="SMR" id="Q2U6C4"/>
<dbReference type="STRING" id="510516.Q2U6C4"/>
<dbReference type="Proteomes" id="UP000006564">
    <property type="component" value="Chromosome 5"/>
</dbReference>
<dbReference type="GO" id="GO:0005737">
    <property type="term" value="C:cytoplasm"/>
    <property type="evidence" value="ECO:0007669"/>
    <property type="project" value="TreeGrafter"/>
</dbReference>
<dbReference type="GO" id="GO:0005634">
    <property type="term" value="C:nucleus"/>
    <property type="evidence" value="ECO:0007669"/>
    <property type="project" value="TreeGrafter"/>
</dbReference>
<dbReference type="GO" id="GO:0005524">
    <property type="term" value="F:ATP binding"/>
    <property type="evidence" value="ECO:0007669"/>
    <property type="project" value="UniProtKB-KW"/>
</dbReference>
<dbReference type="GO" id="GO:0003677">
    <property type="term" value="F:DNA binding"/>
    <property type="evidence" value="ECO:0007669"/>
    <property type="project" value="InterPro"/>
</dbReference>
<dbReference type="GO" id="GO:0004386">
    <property type="term" value="F:helicase activity"/>
    <property type="evidence" value="ECO:0007669"/>
    <property type="project" value="UniProtKB-KW"/>
</dbReference>
<dbReference type="GO" id="GO:0046872">
    <property type="term" value="F:metal ion binding"/>
    <property type="evidence" value="ECO:0007669"/>
    <property type="project" value="UniProtKB-KW"/>
</dbReference>
<dbReference type="GO" id="GO:0004525">
    <property type="term" value="F:ribonuclease III activity"/>
    <property type="evidence" value="ECO:0007669"/>
    <property type="project" value="InterPro"/>
</dbReference>
<dbReference type="GO" id="GO:0003723">
    <property type="term" value="F:RNA binding"/>
    <property type="evidence" value="ECO:0007669"/>
    <property type="project" value="UniProtKB-KW"/>
</dbReference>
<dbReference type="GO" id="GO:0051607">
    <property type="term" value="P:defense response to virus"/>
    <property type="evidence" value="ECO:0007669"/>
    <property type="project" value="UniProtKB-KW"/>
</dbReference>
<dbReference type="GO" id="GO:0050688">
    <property type="term" value="P:regulation of defense response to virus"/>
    <property type="evidence" value="ECO:0007669"/>
    <property type="project" value="UniProtKB-KW"/>
</dbReference>
<dbReference type="GO" id="GO:0030422">
    <property type="term" value="P:siRNA processing"/>
    <property type="evidence" value="ECO:0007669"/>
    <property type="project" value="TreeGrafter"/>
</dbReference>
<dbReference type="CDD" id="cd18034">
    <property type="entry name" value="DEXHc_dicer"/>
    <property type="match status" value="1"/>
</dbReference>
<dbReference type="CDD" id="cd00593">
    <property type="entry name" value="RIBOc"/>
    <property type="match status" value="2"/>
</dbReference>
<dbReference type="CDD" id="cd18802">
    <property type="entry name" value="SF2_C_dicer"/>
    <property type="match status" value="1"/>
</dbReference>
<dbReference type="FunFam" id="1.10.1520.10:FF:000015">
    <property type="entry name" value="Dicer-like protein 1"/>
    <property type="match status" value="1"/>
</dbReference>
<dbReference type="FunFam" id="1.10.1520.10:FF:000026">
    <property type="entry name" value="Dicer-like protein 1"/>
    <property type="match status" value="1"/>
</dbReference>
<dbReference type="FunFam" id="3.30.160.380:FF:000004">
    <property type="entry name" value="Dicer-like protein 1"/>
    <property type="match status" value="1"/>
</dbReference>
<dbReference type="FunFam" id="3.40.50.300:FF:001669">
    <property type="entry name" value="Dicer-like protein 1"/>
    <property type="match status" value="1"/>
</dbReference>
<dbReference type="FunFam" id="3.40.50.300:FF:001988">
    <property type="entry name" value="Dicer-like protein 1"/>
    <property type="match status" value="1"/>
</dbReference>
<dbReference type="Gene3D" id="3.30.160.380">
    <property type="entry name" value="Dicer dimerisation domain"/>
    <property type="match status" value="1"/>
</dbReference>
<dbReference type="Gene3D" id="3.40.50.300">
    <property type="entry name" value="P-loop containing nucleotide triphosphate hydrolases"/>
    <property type="match status" value="2"/>
</dbReference>
<dbReference type="Gene3D" id="1.10.1520.10">
    <property type="entry name" value="Ribonuclease III domain"/>
    <property type="match status" value="2"/>
</dbReference>
<dbReference type="InterPro" id="IPR038248">
    <property type="entry name" value="Dicer_dimer_sf"/>
</dbReference>
<dbReference type="InterPro" id="IPR005034">
    <property type="entry name" value="Dicer_dimerisation_dom"/>
</dbReference>
<dbReference type="InterPro" id="IPR056755">
    <property type="entry name" value="DSRM_2"/>
</dbReference>
<dbReference type="InterPro" id="IPR006935">
    <property type="entry name" value="Helicase/UvrB_N"/>
</dbReference>
<dbReference type="InterPro" id="IPR014001">
    <property type="entry name" value="Helicase_ATP-bd"/>
</dbReference>
<dbReference type="InterPro" id="IPR001650">
    <property type="entry name" value="Helicase_C-like"/>
</dbReference>
<dbReference type="InterPro" id="IPR027417">
    <property type="entry name" value="P-loop_NTPase"/>
</dbReference>
<dbReference type="InterPro" id="IPR003100">
    <property type="entry name" value="PAZ_dom"/>
</dbReference>
<dbReference type="InterPro" id="IPR000999">
    <property type="entry name" value="RNase_III_dom"/>
</dbReference>
<dbReference type="InterPro" id="IPR036389">
    <property type="entry name" value="RNase_III_sf"/>
</dbReference>
<dbReference type="PANTHER" id="PTHR14950:SF62">
    <property type="entry name" value="DICER-LIKE PROTEIN 1"/>
    <property type="match status" value="1"/>
</dbReference>
<dbReference type="PANTHER" id="PTHR14950">
    <property type="entry name" value="DICER-RELATED"/>
    <property type="match status" value="1"/>
</dbReference>
<dbReference type="Pfam" id="PF03368">
    <property type="entry name" value="Dicer_dimer"/>
    <property type="match status" value="1"/>
</dbReference>
<dbReference type="Pfam" id="PF24995">
    <property type="entry name" value="DSRM_2"/>
    <property type="match status" value="1"/>
</dbReference>
<dbReference type="Pfam" id="PF00271">
    <property type="entry name" value="Helicase_C"/>
    <property type="match status" value="1"/>
</dbReference>
<dbReference type="Pfam" id="PF04851">
    <property type="entry name" value="ResIII"/>
    <property type="match status" value="1"/>
</dbReference>
<dbReference type="Pfam" id="PF00636">
    <property type="entry name" value="Ribonuclease_3"/>
    <property type="match status" value="2"/>
</dbReference>
<dbReference type="SMART" id="SM00487">
    <property type="entry name" value="DEXDc"/>
    <property type="match status" value="1"/>
</dbReference>
<dbReference type="SMART" id="SM00490">
    <property type="entry name" value="HELICc"/>
    <property type="match status" value="1"/>
</dbReference>
<dbReference type="SMART" id="SM00535">
    <property type="entry name" value="RIBOc"/>
    <property type="match status" value="2"/>
</dbReference>
<dbReference type="SUPFAM" id="SSF52540">
    <property type="entry name" value="P-loop containing nucleoside triphosphate hydrolases"/>
    <property type="match status" value="1"/>
</dbReference>
<dbReference type="SUPFAM" id="SSF69065">
    <property type="entry name" value="RNase III domain-like"/>
    <property type="match status" value="2"/>
</dbReference>
<dbReference type="PROSITE" id="PS51327">
    <property type="entry name" value="DICER_DSRBF"/>
    <property type="match status" value="1"/>
</dbReference>
<dbReference type="PROSITE" id="PS51192">
    <property type="entry name" value="HELICASE_ATP_BIND_1"/>
    <property type="match status" value="1"/>
</dbReference>
<dbReference type="PROSITE" id="PS51194">
    <property type="entry name" value="HELICASE_CTER"/>
    <property type="match status" value="1"/>
</dbReference>
<dbReference type="PROSITE" id="PS50821">
    <property type="entry name" value="PAZ"/>
    <property type="match status" value="1"/>
</dbReference>
<dbReference type="PROSITE" id="PS00517">
    <property type="entry name" value="RNASE_3_1"/>
    <property type="match status" value="1"/>
</dbReference>
<dbReference type="PROSITE" id="PS50142">
    <property type="entry name" value="RNASE_3_2"/>
    <property type="match status" value="2"/>
</dbReference>
<proteinExistence type="inferred from homology"/>
<gene>
    <name type="primary">dcl1</name>
    <name type="ORF">AO090120000297</name>
</gene>
<sequence>MPPLEVKPLAGYVRSQSLRIPSSLNLSGERTISTTEPTEGNDSSSEESGDNEQISTQRLISQNKRLQSAKFEALLSERADTLTGNSGRPTLDLPDAELSTASLVAKQDAGTGMLDPREYQVELFERAKSQNTIAVLDTGSGKTLIAVLLLKHIIQNELIDRANGKPPRISFFLVDSVTLAFQQAAVLRNNLDQNVAQFFGAMGTDLWSKQTWDHQFENNMVIVCTAEILNQCLLNSYIRMDQINLLIFDEAHHTKKDHPYARIIRESYLKADPTKRPRIFGMTASPIDTKGDIIESATKLEVLLDSKIATTSKPNLLREVVRRPIEESWEYDKLDPPFATKLYQILQARFGDISSLQPVFRFTLQASSELGPCCADRAWAYALADDVLPKLEGNVRKLAQSISSPIPQCALKEISRIQEASDIVKNHSFNSPNVPGELSPKVQLLRQKLIKYFEHPTKTKCIVFTQKRYTAKMLFDLFSTLEIPYLRPGVLIGVRSGDIVGMNVSFRQQFLALVKFRSGEINCLFATSVAEEGLDIPDCNLVVRFDLYNTLIQYVQSRGRARHSSSTYASMIERYNADHAARLVEVREAEKLMQSFCETLPEDRILHGIDSEIDSILQGEEEKRTFIIRATGAKLTYHSALAILARYASSLQYEKETSAQATYVVLPQNNSFVCEVILPEKSPVRGLTGVPASKKSAAKQSAAFDTCVLLRKHKLLDDHFNSVYHRRLPAMRNARLAITSSRTNQYDMLSKPSLWGKQQGTLPEKLFATVISFIPSEPLRRRHRSIILLTRERLPDFPSFTIFLDDDIETIVVTESVEEALHISSQELEYLSTFTFRIFHDVFHKTYAEEPEKLPYWVAPAETKKSKNVSDSKSLTDWELLHLVHENEEIPSTLHPSSEALINRFVFDPWDGRYRYFTMAIDNTLHPSDPPPSFLPRRKFMESIMSYTLSGSKNARAGFLSRCNWQQPVLEVELVRLRRNLLDKMTDTEKDVETRCFVCIEPLRISAIPEEIAASCLAFPAIINRLDAYLIALEGCKTLDLSVKPEYALEAFTKDSDNTEEHRVQQIHVQRGMGKNYERLEFLGDCFLKMATSISLFVQNPDDDEFDFHVNRMCLICNKNLFNTALKKELYQYTRSRGFSRHTWYPDGLTLLHGRDHRKKISAESKHALREKTVADVCEALIGASLLSGGLHNQFDMAVKAVTAVVDSPNHKALCWADYTSSYMLPKYQTQSPDGYELDLGRKVEEKLGYRFKYPRLLHSAFTHPSYPSTWAKVPCYQRLEFLGDSLLDMVCVDDLFYRYPDKDPQWLTEHKMAMVSNKFLGALAVKLGLHTHLRHFSNPLQSQITHYAEEIQAAENESQGAVDYWLVTKDPPKCLPDMVEAYLGAAFVDSDFQFRVVEDFFQRHVKSYFHDMTIYDTFANKHPTTFLQNRLTNEYGCTNYCLKAGEIPVVDGGTVSVLAAVIVHEVVIAEGTASSGRYAKVKASEKALSVLENMGPSEFREKYHCDCRTANGSQPMDIGTAI</sequence>
<accession>Q2U6C4</accession>
<comment type="function">
    <text evidence="1">Dicer-like endonuclease involved in cleaving double-stranded RNA in the RNA interference (RNAi) pathway. Produces 21 to 25 bp dsRNAs (siRNAs) which target the selective destruction of homologous RNAs leading to sequence-specific suppression of gene expression, called post-transcriptional gene silencing (PTGS). Part of a broad host defense response against viral infection and transposons (By similarity).</text>
</comment>
<comment type="cofactor">
    <cofactor evidence="1">
        <name>Mg(2+)</name>
        <dbReference type="ChEBI" id="CHEBI:18420"/>
    </cofactor>
    <cofactor evidence="1">
        <name>Mn(2+)</name>
        <dbReference type="ChEBI" id="CHEBI:29035"/>
    </cofactor>
</comment>
<comment type="similarity">
    <text evidence="7">Belongs to the helicase family. Dicer subfamily.</text>
</comment>
<comment type="sequence caution" evidence="9">
    <conflict type="erroneous gene model prediction">
        <sequence resource="EMBL-CDS" id="BAE62891"/>
    </conflict>
</comment>
<keyword id="KW-0051">Antiviral defense</keyword>
<keyword id="KW-0930">Antiviral protein</keyword>
<keyword id="KW-0067">ATP-binding</keyword>
<keyword id="KW-0347">Helicase</keyword>
<keyword id="KW-0378">Hydrolase</keyword>
<keyword id="KW-0460">Magnesium</keyword>
<keyword id="KW-0464">Manganese</keyword>
<keyword id="KW-0479">Metal-binding</keyword>
<keyword id="KW-0547">Nucleotide-binding</keyword>
<keyword id="KW-1185">Reference proteome</keyword>
<keyword id="KW-0677">Repeat</keyword>
<keyword id="KW-0694">RNA-binding</keyword>
<keyword id="KW-0862">Zinc</keyword>